<protein>
    <recommendedName>
        <fullName evidence="1">N-acetylneuraminate lyase</fullName>
        <shortName evidence="1">NAL</shortName>
        <shortName evidence="1">Neu5Ac lyase</shortName>
        <ecNumber evidence="1">4.1.3.3</ecNumber>
    </recommendedName>
    <alternativeName>
        <fullName evidence="1">N-acetylneuraminate pyruvate-lyase</fullName>
    </alternativeName>
    <alternativeName>
        <fullName evidence="1">N-acetylneuraminic acid aldolase</fullName>
    </alternativeName>
    <alternativeName>
        <fullName evidence="1">Sialate lyase</fullName>
    </alternativeName>
    <alternativeName>
        <fullName evidence="1">Sialic acid aldolase</fullName>
    </alternativeName>
    <alternativeName>
        <fullName evidence="1">Sialic acid lyase</fullName>
    </alternativeName>
</protein>
<comment type="function">
    <text evidence="1">Catalyzes the reversible aldol cleavage of N-acetylneuraminic acid (sialic acid; Neu5Ac) to form pyruvate and N-acetylmannosamine (ManNAc) via a Schiff base intermediate.</text>
</comment>
<comment type="catalytic activity">
    <reaction evidence="1">
        <text>aceneuramate = aldehydo-N-acetyl-D-mannosamine + pyruvate</text>
        <dbReference type="Rhea" id="RHEA:23296"/>
        <dbReference type="ChEBI" id="CHEBI:15361"/>
        <dbReference type="ChEBI" id="CHEBI:17122"/>
        <dbReference type="ChEBI" id="CHEBI:173083"/>
        <dbReference type="EC" id="4.1.3.3"/>
    </reaction>
</comment>
<comment type="pathway">
    <text evidence="1">Amino-sugar metabolism; N-acetylneuraminate degradation; D-fructose 6-phosphate from N-acetylneuraminate: step 1/5.</text>
</comment>
<comment type="subunit">
    <text evidence="1">Homotetramer.</text>
</comment>
<comment type="subcellular location">
    <subcellularLocation>
        <location evidence="1">Cytoplasm</location>
    </subcellularLocation>
</comment>
<comment type="similarity">
    <text evidence="1">Belongs to the DapA family. NanA subfamily.</text>
</comment>
<proteinExistence type="inferred from homology"/>
<name>NANA_ECO55</name>
<sequence length="297" mass="32593">MATNLRGVMAALLTPFDQQQALDKASLRRLVQFNIQQGIDGLYVGGSTGEAFVQSLSEREQVLEIVAEEAKGKIKLIAHVGCVSTAESQQLAASAKRYGFDAVSAVTPFYYPFSFEEHCDHYRAIIDSADGLPMVVYNIPALSGVKLTLDQINTLVTLPGVGALKQTSGDLYQMEQIRREHPDLVLYNGYDEIFASGLLAGADGGIGSTYNIMGWRYQGIVKALKEGDIQTAQKLQTECNKVIDLLIKTGVFRGLKTVLHYMDVVSVPLCRKPFGPVDEKYLPELKALAQQLMQERG</sequence>
<gene>
    <name evidence="1" type="primary">nanA</name>
    <name type="ordered locus">EC55989_3638</name>
</gene>
<dbReference type="EC" id="4.1.3.3" evidence="1"/>
<dbReference type="EMBL" id="CU928145">
    <property type="protein sequence ID" value="CAU99884.1"/>
    <property type="molecule type" value="Genomic_DNA"/>
</dbReference>
<dbReference type="RefSeq" id="WP_000224714.1">
    <property type="nucleotide sequence ID" value="NZ_CP028304.1"/>
</dbReference>
<dbReference type="SMR" id="B7LHT3"/>
<dbReference type="GeneID" id="93778761"/>
<dbReference type="KEGG" id="eck:EC55989_3638"/>
<dbReference type="HOGENOM" id="CLU_049343_6_0_6"/>
<dbReference type="UniPathway" id="UPA00629">
    <property type="reaction ID" value="UER00680"/>
</dbReference>
<dbReference type="Proteomes" id="UP000000746">
    <property type="component" value="Chromosome"/>
</dbReference>
<dbReference type="GO" id="GO:0005829">
    <property type="term" value="C:cytosol"/>
    <property type="evidence" value="ECO:0007669"/>
    <property type="project" value="TreeGrafter"/>
</dbReference>
<dbReference type="GO" id="GO:0008747">
    <property type="term" value="F:N-acetylneuraminate lyase activity"/>
    <property type="evidence" value="ECO:0007669"/>
    <property type="project" value="UniProtKB-UniRule"/>
</dbReference>
<dbReference type="GO" id="GO:0005975">
    <property type="term" value="P:carbohydrate metabolic process"/>
    <property type="evidence" value="ECO:0007669"/>
    <property type="project" value="UniProtKB-UniRule"/>
</dbReference>
<dbReference type="GO" id="GO:0019262">
    <property type="term" value="P:N-acetylneuraminate catabolic process"/>
    <property type="evidence" value="ECO:0007669"/>
    <property type="project" value="UniProtKB-UniRule"/>
</dbReference>
<dbReference type="CDD" id="cd00954">
    <property type="entry name" value="NAL"/>
    <property type="match status" value="1"/>
</dbReference>
<dbReference type="FunFam" id="3.20.20.70:FF:000039">
    <property type="entry name" value="N-acetylneuraminate lyase"/>
    <property type="match status" value="1"/>
</dbReference>
<dbReference type="Gene3D" id="3.20.20.70">
    <property type="entry name" value="Aldolase class I"/>
    <property type="match status" value="1"/>
</dbReference>
<dbReference type="HAMAP" id="MF_01237">
    <property type="entry name" value="N_acetylneuram_lyase"/>
    <property type="match status" value="1"/>
</dbReference>
<dbReference type="InterPro" id="IPR013785">
    <property type="entry name" value="Aldolase_TIM"/>
</dbReference>
<dbReference type="InterPro" id="IPR002220">
    <property type="entry name" value="DapA-like"/>
</dbReference>
<dbReference type="InterPro" id="IPR005264">
    <property type="entry name" value="NanA"/>
</dbReference>
<dbReference type="InterPro" id="IPR020625">
    <property type="entry name" value="Schiff_base-form_aldolases_AS"/>
</dbReference>
<dbReference type="InterPro" id="IPR020624">
    <property type="entry name" value="Schiff_base-form_aldolases_CS"/>
</dbReference>
<dbReference type="NCBIfam" id="TIGR00683">
    <property type="entry name" value="nanA"/>
    <property type="match status" value="1"/>
</dbReference>
<dbReference type="NCBIfam" id="NF003164">
    <property type="entry name" value="PRK04147.1"/>
    <property type="match status" value="1"/>
</dbReference>
<dbReference type="PANTHER" id="PTHR42849">
    <property type="entry name" value="N-ACETYLNEURAMINATE LYASE"/>
    <property type="match status" value="1"/>
</dbReference>
<dbReference type="PANTHER" id="PTHR42849:SF1">
    <property type="entry name" value="N-ACETYLNEURAMINATE LYASE"/>
    <property type="match status" value="1"/>
</dbReference>
<dbReference type="Pfam" id="PF00701">
    <property type="entry name" value="DHDPS"/>
    <property type="match status" value="1"/>
</dbReference>
<dbReference type="PIRSF" id="PIRSF001365">
    <property type="entry name" value="DHDPS"/>
    <property type="match status" value="1"/>
</dbReference>
<dbReference type="PRINTS" id="PR00146">
    <property type="entry name" value="DHPICSNTHASE"/>
</dbReference>
<dbReference type="SMART" id="SM01130">
    <property type="entry name" value="DHDPS"/>
    <property type="match status" value="1"/>
</dbReference>
<dbReference type="SUPFAM" id="SSF51569">
    <property type="entry name" value="Aldolase"/>
    <property type="match status" value="1"/>
</dbReference>
<dbReference type="PROSITE" id="PS00665">
    <property type="entry name" value="DHDPS_1"/>
    <property type="match status" value="1"/>
</dbReference>
<dbReference type="PROSITE" id="PS00666">
    <property type="entry name" value="DHDPS_2"/>
    <property type="match status" value="1"/>
</dbReference>
<evidence type="ECO:0000255" key="1">
    <source>
        <dbReference type="HAMAP-Rule" id="MF_01237"/>
    </source>
</evidence>
<accession>B7LHT3</accession>
<feature type="chain" id="PRO_1000165004" description="N-acetylneuraminate lyase">
    <location>
        <begin position="1"/>
        <end position="297"/>
    </location>
</feature>
<feature type="active site" description="Proton donor" evidence="1">
    <location>
        <position position="137"/>
    </location>
</feature>
<feature type="active site" description="Schiff-base intermediate with substrate" evidence="1">
    <location>
        <position position="165"/>
    </location>
</feature>
<feature type="binding site" evidence="1">
    <location>
        <position position="47"/>
    </location>
    <ligand>
        <name>aceneuramate</name>
        <dbReference type="ChEBI" id="CHEBI:173083"/>
    </ligand>
</feature>
<feature type="binding site" evidence="1">
    <location>
        <position position="48"/>
    </location>
    <ligand>
        <name>aceneuramate</name>
        <dbReference type="ChEBI" id="CHEBI:173083"/>
    </ligand>
</feature>
<feature type="binding site" evidence="1">
    <location>
        <position position="167"/>
    </location>
    <ligand>
        <name>aceneuramate</name>
        <dbReference type="ChEBI" id="CHEBI:173083"/>
    </ligand>
</feature>
<feature type="binding site" evidence="1">
    <location>
        <position position="189"/>
    </location>
    <ligand>
        <name>aceneuramate</name>
        <dbReference type="ChEBI" id="CHEBI:173083"/>
    </ligand>
</feature>
<feature type="binding site" evidence="1">
    <location>
        <position position="191"/>
    </location>
    <ligand>
        <name>aceneuramate</name>
        <dbReference type="ChEBI" id="CHEBI:173083"/>
    </ligand>
</feature>
<feature type="binding site" evidence="1">
    <location>
        <position position="192"/>
    </location>
    <ligand>
        <name>aceneuramate</name>
        <dbReference type="ChEBI" id="CHEBI:173083"/>
    </ligand>
</feature>
<feature type="binding site" evidence="1">
    <location>
        <position position="208"/>
    </location>
    <ligand>
        <name>aceneuramate</name>
        <dbReference type="ChEBI" id="CHEBI:173083"/>
    </ligand>
</feature>
<keyword id="KW-0119">Carbohydrate metabolism</keyword>
<keyword id="KW-0963">Cytoplasm</keyword>
<keyword id="KW-0456">Lyase</keyword>
<keyword id="KW-1185">Reference proteome</keyword>
<keyword id="KW-0704">Schiff base</keyword>
<reference key="1">
    <citation type="journal article" date="2009" name="PLoS Genet.">
        <title>Organised genome dynamics in the Escherichia coli species results in highly diverse adaptive paths.</title>
        <authorList>
            <person name="Touchon M."/>
            <person name="Hoede C."/>
            <person name="Tenaillon O."/>
            <person name="Barbe V."/>
            <person name="Baeriswyl S."/>
            <person name="Bidet P."/>
            <person name="Bingen E."/>
            <person name="Bonacorsi S."/>
            <person name="Bouchier C."/>
            <person name="Bouvet O."/>
            <person name="Calteau A."/>
            <person name="Chiapello H."/>
            <person name="Clermont O."/>
            <person name="Cruveiller S."/>
            <person name="Danchin A."/>
            <person name="Diard M."/>
            <person name="Dossat C."/>
            <person name="Karoui M.E."/>
            <person name="Frapy E."/>
            <person name="Garry L."/>
            <person name="Ghigo J.M."/>
            <person name="Gilles A.M."/>
            <person name="Johnson J."/>
            <person name="Le Bouguenec C."/>
            <person name="Lescat M."/>
            <person name="Mangenot S."/>
            <person name="Martinez-Jehanne V."/>
            <person name="Matic I."/>
            <person name="Nassif X."/>
            <person name="Oztas S."/>
            <person name="Petit M.A."/>
            <person name="Pichon C."/>
            <person name="Rouy Z."/>
            <person name="Ruf C.S."/>
            <person name="Schneider D."/>
            <person name="Tourret J."/>
            <person name="Vacherie B."/>
            <person name="Vallenet D."/>
            <person name="Medigue C."/>
            <person name="Rocha E.P.C."/>
            <person name="Denamur E."/>
        </authorList>
    </citation>
    <scope>NUCLEOTIDE SEQUENCE [LARGE SCALE GENOMIC DNA]</scope>
    <source>
        <strain>55989 / EAEC</strain>
    </source>
</reference>
<organism>
    <name type="scientific">Escherichia coli (strain 55989 / EAEC)</name>
    <dbReference type="NCBI Taxonomy" id="585055"/>
    <lineage>
        <taxon>Bacteria</taxon>
        <taxon>Pseudomonadati</taxon>
        <taxon>Pseudomonadota</taxon>
        <taxon>Gammaproteobacteria</taxon>
        <taxon>Enterobacterales</taxon>
        <taxon>Enterobacteriaceae</taxon>
        <taxon>Escherichia</taxon>
    </lineage>
</organism>